<name>NUOD_BURCM</name>
<comment type="function">
    <text evidence="1">NDH-1 shuttles electrons from NADH, via FMN and iron-sulfur (Fe-S) centers, to quinones in the respiratory chain. The immediate electron acceptor for the enzyme in this species is believed to be ubiquinone. Couples the redox reaction to proton translocation (for every two electrons transferred, four hydrogen ions are translocated across the cytoplasmic membrane), and thus conserves the redox energy in a proton gradient.</text>
</comment>
<comment type="catalytic activity">
    <reaction evidence="1">
        <text>a quinone + NADH + 5 H(+)(in) = a quinol + NAD(+) + 4 H(+)(out)</text>
        <dbReference type="Rhea" id="RHEA:57888"/>
        <dbReference type="ChEBI" id="CHEBI:15378"/>
        <dbReference type="ChEBI" id="CHEBI:24646"/>
        <dbReference type="ChEBI" id="CHEBI:57540"/>
        <dbReference type="ChEBI" id="CHEBI:57945"/>
        <dbReference type="ChEBI" id="CHEBI:132124"/>
    </reaction>
</comment>
<comment type="subunit">
    <text evidence="1">NDH-1 is composed of 14 different subunits. Subunits NuoB, C, D, E, F, and G constitute the peripheral sector of the complex.</text>
</comment>
<comment type="subcellular location">
    <subcellularLocation>
        <location evidence="1">Cell inner membrane</location>
        <topology evidence="1">Peripheral membrane protein</topology>
        <orientation evidence="1">Cytoplasmic side</orientation>
    </subcellularLocation>
</comment>
<comment type="similarity">
    <text evidence="1">Belongs to the complex I 49 kDa subunit family.</text>
</comment>
<dbReference type="EC" id="7.1.1.-" evidence="1"/>
<dbReference type="EMBL" id="CP000440">
    <property type="protein sequence ID" value="ABI87840.1"/>
    <property type="molecule type" value="Genomic_DNA"/>
</dbReference>
<dbReference type="RefSeq" id="WP_011657482.1">
    <property type="nucleotide sequence ID" value="NZ_CP009798.1"/>
</dbReference>
<dbReference type="SMR" id="Q0BDD3"/>
<dbReference type="KEGG" id="bam:Bamb_2284"/>
<dbReference type="PATRIC" id="fig|339670.21.peg.2643"/>
<dbReference type="eggNOG" id="COG0649">
    <property type="taxonomic scope" value="Bacteria"/>
</dbReference>
<dbReference type="Proteomes" id="UP000000662">
    <property type="component" value="Chromosome 1"/>
</dbReference>
<dbReference type="GO" id="GO:0005886">
    <property type="term" value="C:plasma membrane"/>
    <property type="evidence" value="ECO:0007669"/>
    <property type="project" value="UniProtKB-SubCell"/>
</dbReference>
<dbReference type="GO" id="GO:0051287">
    <property type="term" value="F:NAD binding"/>
    <property type="evidence" value="ECO:0007669"/>
    <property type="project" value="InterPro"/>
</dbReference>
<dbReference type="GO" id="GO:0050136">
    <property type="term" value="F:NADH:ubiquinone reductase (non-electrogenic) activity"/>
    <property type="evidence" value="ECO:0007669"/>
    <property type="project" value="UniProtKB-UniRule"/>
</dbReference>
<dbReference type="GO" id="GO:0048038">
    <property type="term" value="F:quinone binding"/>
    <property type="evidence" value="ECO:0007669"/>
    <property type="project" value="UniProtKB-KW"/>
</dbReference>
<dbReference type="FunFam" id="1.10.645.10:FF:000005">
    <property type="entry name" value="NADH-quinone oxidoreductase subunit D"/>
    <property type="match status" value="1"/>
</dbReference>
<dbReference type="Gene3D" id="1.10.645.10">
    <property type="entry name" value="Cytochrome-c3 Hydrogenase, chain B"/>
    <property type="match status" value="1"/>
</dbReference>
<dbReference type="HAMAP" id="MF_01358">
    <property type="entry name" value="NDH1_NuoD"/>
    <property type="match status" value="1"/>
</dbReference>
<dbReference type="InterPro" id="IPR001135">
    <property type="entry name" value="NADH_Q_OxRdtase_suD"/>
</dbReference>
<dbReference type="InterPro" id="IPR014029">
    <property type="entry name" value="NADH_UbQ_OxRdtase_49kDa_CS"/>
</dbReference>
<dbReference type="InterPro" id="IPR022885">
    <property type="entry name" value="NDH1_su_D/H"/>
</dbReference>
<dbReference type="InterPro" id="IPR029014">
    <property type="entry name" value="NiFe-Hase_large"/>
</dbReference>
<dbReference type="NCBIfam" id="TIGR01962">
    <property type="entry name" value="NuoD"/>
    <property type="match status" value="1"/>
</dbReference>
<dbReference type="NCBIfam" id="NF004739">
    <property type="entry name" value="PRK06075.1"/>
    <property type="match status" value="1"/>
</dbReference>
<dbReference type="PANTHER" id="PTHR11993:SF10">
    <property type="entry name" value="NADH DEHYDROGENASE [UBIQUINONE] IRON-SULFUR PROTEIN 2, MITOCHONDRIAL"/>
    <property type="match status" value="1"/>
</dbReference>
<dbReference type="PANTHER" id="PTHR11993">
    <property type="entry name" value="NADH-UBIQUINONE OXIDOREDUCTASE 49 KDA SUBUNIT"/>
    <property type="match status" value="1"/>
</dbReference>
<dbReference type="Pfam" id="PF00346">
    <property type="entry name" value="Complex1_49kDa"/>
    <property type="match status" value="1"/>
</dbReference>
<dbReference type="SUPFAM" id="SSF56762">
    <property type="entry name" value="HydB/Nqo4-like"/>
    <property type="match status" value="1"/>
</dbReference>
<dbReference type="PROSITE" id="PS00535">
    <property type="entry name" value="COMPLEX1_49K"/>
    <property type="match status" value="1"/>
</dbReference>
<gene>
    <name evidence="1" type="primary">nuoD</name>
    <name type="ordered locus">Bamb_2284</name>
</gene>
<accession>Q0BDD3</accession>
<organism>
    <name type="scientific">Burkholderia ambifaria (strain ATCC BAA-244 / DSM 16087 / CCUG 44356 / LMG 19182 / AMMD)</name>
    <name type="common">Burkholderia cepacia (strain AMMD)</name>
    <dbReference type="NCBI Taxonomy" id="339670"/>
    <lineage>
        <taxon>Bacteria</taxon>
        <taxon>Pseudomonadati</taxon>
        <taxon>Pseudomonadota</taxon>
        <taxon>Betaproteobacteria</taxon>
        <taxon>Burkholderiales</taxon>
        <taxon>Burkholderiaceae</taxon>
        <taxon>Burkholderia</taxon>
        <taxon>Burkholderia cepacia complex</taxon>
    </lineage>
</organism>
<protein>
    <recommendedName>
        <fullName evidence="1">NADH-quinone oxidoreductase subunit D</fullName>
        <ecNumber evidence="1">7.1.1.-</ecNumber>
    </recommendedName>
    <alternativeName>
        <fullName evidence="1">NADH dehydrogenase I subunit D</fullName>
    </alternativeName>
    <alternativeName>
        <fullName evidence="1">NDH-1 subunit D</fullName>
    </alternativeName>
</protein>
<proteinExistence type="inferred from homology"/>
<sequence length="417" mass="47486">MAEIKNYTLNFGPQHPAAHGVLRLVLELDGEVIQRADPHIGLLHRATEKLAESKTFIQSVPYMDRLDYVSMMVNEHGYVLAIERLLGIDVPERAQYIRVLFDEITRVLNHLMWIGAHALDVGAMAVFLYAFREREDLMDVYEAVSGARMHAAYYRPGGVYRDLPDAMPQYKASKIRNEKALARMNEARSGSVLDFIDDFFTRFPKCVDEYETLLTDNRIWKQRLVGIGVVSPERALQMGLTGPMLRGSGIAWDLRKKQPYEVYDRMDFDVPVGVNGDCYDRYLVRVEEMRQSIRIAKQCIEWLRKNPGPVMTDNHKVAPPSRVGMKTNMEDLIHHFKLFTEGFHVPEGEAYAAVEHPKGEFGIYLVSDGANKPYRLKIRAPGFAHLASLDEMARGHMIADAVTIIGTQDIVFGEIDR</sequence>
<reference key="1">
    <citation type="submission" date="2006-08" db="EMBL/GenBank/DDBJ databases">
        <title>Complete sequence of chromosome 1 of Burkholderia cepacia AMMD.</title>
        <authorList>
            <person name="Copeland A."/>
            <person name="Lucas S."/>
            <person name="Lapidus A."/>
            <person name="Barry K."/>
            <person name="Detter J.C."/>
            <person name="Glavina del Rio T."/>
            <person name="Hammon N."/>
            <person name="Israni S."/>
            <person name="Pitluck S."/>
            <person name="Bruce D."/>
            <person name="Chain P."/>
            <person name="Malfatti S."/>
            <person name="Shin M."/>
            <person name="Vergez L."/>
            <person name="Schmutz J."/>
            <person name="Larimer F."/>
            <person name="Land M."/>
            <person name="Hauser L."/>
            <person name="Kyrpides N."/>
            <person name="Kim E."/>
            <person name="Parke J."/>
            <person name="Coenye T."/>
            <person name="Konstantinidis K."/>
            <person name="Ramette A."/>
            <person name="Tiedje J."/>
            <person name="Richardson P."/>
        </authorList>
    </citation>
    <scope>NUCLEOTIDE SEQUENCE [LARGE SCALE GENOMIC DNA]</scope>
    <source>
        <strain>ATCC BAA-244 / DSM 16087 / CCUG 44356 / LMG 19182 / AMMD</strain>
    </source>
</reference>
<evidence type="ECO:0000255" key="1">
    <source>
        <dbReference type="HAMAP-Rule" id="MF_01358"/>
    </source>
</evidence>
<feature type="chain" id="PRO_0000371822" description="NADH-quinone oxidoreductase subunit D">
    <location>
        <begin position="1"/>
        <end position="417"/>
    </location>
</feature>
<keyword id="KW-0997">Cell inner membrane</keyword>
<keyword id="KW-1003">Cell membrane</keyword>
<keyword id="KW-0472">Membrane</keyword>
<keyword id="KW-0520">NAD</keyword>
<keyword id="KW-0874">Quinone</keyword>
<keyword id="KW-1278">Translocase</keyword>
<keyword id="KW-0813">Transport</keyword>
<keyword id="KW-0830">Ubiquinone</keyword>